<name>PAND_ECO45</name>
<gene>
    <name evidence="1" type="primary">panD</name>
    <name type="ordered locus">ECS88_0141</name>
</gene>
<sequence>MIRTMLQGKLHRVKVTHADLHYEGSCAIDQDFLDAAGILENEAIDIWNVTNGKRFSTYAIAAERGSRIISVNGAAAHCASVGDIVIIASFVTMPDEEARTWRPNVAYFEGDNEMKRTAKAIPVQVA</sequence>
<protein>
    <recommendedName>
        <fullName evidence="1">Aspartate 1-decarboxylase</fullName>
        <ecNumber evidence="1">4.1.1.11</ecNumber>
    </recommendedName>
    <alternativeName>
        <fullName evidence="1">Aspartate alpha-decarboxylase</fullName>
    </alternativeName>
    <component>
        <recommendedName>
            <fullName evidence="1">Aspartate 1-decarboxylase beta chain</fullName>
        </recommendedName>
    </component>
    <component>
        <recommendedName>
            <fullName evidence="1">Aspartate 1-decarboxylase alpha chain</fullName>
        </recommendedName>
    </component>
</protein>
<comment type="function">
    <text evidence="1">Catalyzes the pyruvoyl-dependent decarboxylation of aspartate to produce beta-alanine.</text>
</comment>
<comment type="catalytic activity">
    <reaction evidence="1">
        <text>L-aspartate + H(+) = beta-alanine + CO2</text>
        <dbReference type="Rhea" id="RHEA:19497"/>
        <dbReference type="ChEBI" id="CHEBI:15378"/>
        <dbReference type="ChEBI" id="CHEBI:16526"/>
        <dbReference type="ChEBI" id="CHEBI:29991"/>
        <dbReference type="ChEBI" id="CHEBI:57966"/>
        <dbReference type="EC" id="4.1.1.11"/>
    </reaction>
</comment>
<comment type="cofactor">
    <cofactor evidence="1">
        <name>pyruvate</name>
        <dbReference type="ChEBI" id="CHEBI:15361"/>
    </cofactor>
    <text evidence="1">Binds 1 pyruvoyl group covalently per subunit.</text>
</comment>
<comment type="pathway">
    <text evidence="1">Cofactor biosynthesis; (R)-pantothenate biosynthesis; beta-alanine from L-aspartate: step 1/1.</text>
</comment>
<comment type="subunit">
    <text evidence="1">Heterooctamer of four alpha and four beta subunits.</text>
</comment>
<comment type="subcellular location">
    <subcellularLocation>
        <location evidence="1">Cytoplasm</location>
    </subcellularLocation>
</comment>
<comment type="PTM">
    <text evidence="1">Is synthesized initially as an inactive proenzyme, which is activated by self-cleavage at a specific serine bond to produce a beta-subunit with a hydroxyl group at its C-terminus and an alpha-subunit with a pyruvoyl group at its N-terminus.</text>
</comment>
<comment type="similarity">
    <text evidence="1">Belongs to the PanD family.</text>
</comment>
<accession>B7MBB4</accession>
<feature type="chain" id="PRO_1000191999" description="Aspartate 1-decarboxylase beta chain" evidence="1">
    <location>
        <begin position="1"/>
        <end position="24"/>
    </location>
</feature>
<feature type="chain" id="PRO_1000192000" description="Aspartate 1-decarboxylase alpha chain" evidence="1">
    <location>
        <begin position="25"/>
        <end position="126"/>
    </location>
</feature>
<feature type="active site" description="Schiff-base intermediate with substrate; via pyruvic acid" evidence="1">
    <location>
        <position position="25"/>
    </location>
</feature>
<feature type="active site" description="Proton donor" evidence="1">
    <location>
        <position position="58"/>
    </location>
</feature>
<feature type="binding site" evidence="1">
    <location>
        <position position="57"/>
    </location>
    <ligand>
        <name>substrate</name>
    </ligand>
</feature>
<feature type="binding site" evidence="1">
    <location>
        <begin position="73"/>
        <end position="75"/>
    </location>
    <ligand>
        <name>substrate</name>
    </ligand>
</feature>
<feature type="modified residue" description="Pyruvic acid (Ser)" evidence="1">
    <location>
        <position position="25"/>
    </location>
</feature>
<proteinExistence type="inferred from homology"/>
<reference key="1">
    <citation type="journal article" date="2009" name="PLoS Genet.">
        <title>Organised genome dynamics in the Escherichia coli species results in highly diverse adaptive paths.</title>
        <authorList>
            <person name="Touchon M."/>
            <person name="Hoede C."/>
            <person name="Tenaillon O."/>
            <person name="Barbe V."/>
            <person name="Baeriswyl S."/>
            <person name="Bidet P."/>
            <person name="Bingen E."/>
            <person name="Bonacorsi S."/>
            <person name="Bouchier C."/>
            <person name="Bouvet O."/>
            <person name="Calteau A."/>
            <person name="Chiapello H."/>
            <person name="Clermont O."/>
            <person name="Cruveiller S."/>
            <person name="Danchin A."/>
            <person name="Diard M."/>
            <person name="Dossat C."/>
            <person name="Karoui M.E."/>
            <person name="Frapy E."/>
            <person name="Garry L."/>
            <person name="Ghigo J.M."/>
            <person name="Gilles A.M."/>
            <person name="Johnson J."/>
            <person name="Le Bouguenec C."/>
            <person name="Lescat M."/>
            <person name="Mangenot S."/>
            <person name="Martinez-Jehanne V."/>
            <person name="Matic I."/>
            <person name="Nassif X."/>
            <person name="Oztas S."/>
            <person name="Petit M.A."/>
            <person name="Pichon C."/>
            <person name="Rouy Z."/>
            <person name="Ruf C.S."/>
            <person name="Schneider D."/>
            <person name="Tourret J."/>
            <person name="Vacherie B."/>
            <person name="Vallenet D."/>
            <person name="Medigue C."/>
            <person name="Rocha E.P.C."/>
            <person name="Denamur E."/>
        </authorList>
    </citation>
    <scope>NUCLEOTIDE SEQUENCE [LARGE SCALE GENOMIC DNA]</scope>
    <source>
        <strain>S88 / ExPEC</strain>
    </source>
</reference>
<dbReference type="EC" id="4.1.1.11" evidence="1"/>
<dbReference type="EMBL" id="CU928161">
    <property type="protein sequence ID" value="CAR01506.1"/>
    <property type="molecule type" value="Genomic_DNA"/>
</dbReference>
<dbReference type="RefSeq" id="WP_000621515.1">
    <property type="nucleotide sequence ID" value="NC_011742.1"/>
</dbReference>
<dbReference type="SMR" id="B7MBB4"/>
<dbReference type="GeneID" id="93777305"/>
<dbReference type="KEGG" id="ecz:ECS88_0141"/>
<dbReference type="HOGENOM" id="CLU_115305_2_1_6"/>
<dbReference type="UniPathway" id="UPA00028">
    <property type="reaction ID" value="UER00002"/>
</dbReference>
<dbReference type="Proteomes" id="UP000000747">
    <property type="component" value="Chromosome"/>
</dbReference>
<dbReference type="GO" id="GO:0005829">
    <property type="term" value="C:cytosol"/>
    <property type="evidence" value="ECO:0007669"/>
    <property type="project" value="TreeGrafter"/>
</dbReference>
<dbReference type="GO" id="GO:0004068">
    <property type="term" value="F:aspartate 1-decarboxylase activity"/>
    <property type="evidence" value="ECO:0007669"/>
    <property type="project" value="UniProtKB-UniRule"/>
</dbReference>
<dbReference type="GO" id="GO:0006523">
    <property type="term" value="P:alanine biosynthetic process"/>
    <property type="evidence" value="ECO:0007669"/>
    <property type="project" value="InterPro"/>
</dbReference>
<dbReference type="GO" id="GO:0015940">
    <property type="term" value="P:pantothenate biosynthetic process"/>
    <property type="evidence" value="ECO:0007669"/>
    <property type="project" value="UniProtKB-UniRule"/>
</dbReference>
<dbReference type="CDD" id="cd06919">
    <property type="entry name" value="Asp_decarbox"/>
    <property type="match status" value="1"/>
</dbReference>
<dbReference type="FunFam" id="2.40.40.20:FF:000004">
    <property type="entry name" value="Aspartate 1-decarboxylase"/>
    <property type="match status" value="1"/>
</dbReference>
<dbReference type="Gene3D" id="2.40.40.20">
    <property type="match status" value="1"/>
</dbReference>
<dbReference type="HAMAP" id="MF_00446">
    <property type="entry name" value="PanD"/>
    <property type="match status" value="1"/>
</dbReference>
<dbReference type="InterPro" id="IPR009010">
    <property type="entry name" value="Asp_de-COase-like_dom_sf"/>
</dbReference>
<dbReference type="InterPro" id="IPR003190">
    <property type="entry name" value="Asp_decarbox"/>
</dbReference>
<dbReference type="NCBIfam" id="TIGR00223">
    <property type="entry name" value="panD"/>
    <property type="match status" value="1"/>
</dbReference>
<dbReference type="PANTHER" id="PTHR21012">
    <property type="entry name" value="ASPARTATE 1-DECARBOXYLASE"/>
    <property type="match status" value="1"/>
</dbReference>
<dbReference type="PANTHER" id="PTHR21012:SF0">
    <property type="entry name" value="ASPARTATE 1-DECARBOXYLASE"/>
    <property type="match status" value="1"/>
</dbReference>
<dbReference type="Pfam" id="PF02261">
    <property type="entry name" value="Asp_decarbox"/>
    <property type="match status" value="1"/>
</dbReference>
<dbReference type="PIRSF" id="PIRSF006246">
    <property type="entry name" value="Asp_decarbox"/>
    <property type="match status" value="1"/>
</dbReference>
<dbReference type="SUPFAM" id="SSF50692">
    <property type="entry name" value="ADC-like"/>
    <property type="match status" value="1"/>
</dbReference>
<keyword id="KW-0068">Autocatalytic cleavage</keyword>
<keyword id="KW-0963">Cytoplasm</keyword>
<keyword id="KW-0210">Decarboxylase</keyword>
<keyword id="KW-0456">Lyase</keyword>
<keyword id="KW-0566">Pantothenate biosynthesis</keyword>
<keyword id="KW-0670">Pyruvate</keyword>
<keyword id="KW-1185">Reference proteome</keyword>
<keyword id="KW-0704">Schiff base</keyword>
<keyword id="KW-0865">Zymogen</keyword>
<evidence type="ECO:0000255" key="1">
    <source>
        <dbReference type="HAMAP-Rule" id="MF_00446"/>
    </source>
</evidence>
<organism>
    <name type="scientific">Escherichia coli O45:K1 (strain S88 / ExPEC)</name>
    <dbReference type="NCBI Taxonomy" id="585035"/>
    <lineage>
        <taxon>Bacteria</taxon>
        <taxon>Pseudomonadati</taxon>
        <taxon>Pseudomonadota</taxon>
        <taxon>Gammaproteobacteria</taxon>
        <taxon>Enterobacterales</taxon>
        <taxon>Enterobacteriaceae</taxon>
        <taxon>Escherichia</taxon>
    </lineage>
</organism>